<gene>
    <name evidence="1" type="primary">miaA</name>
    <name type="ordered locus">ECH74115_5687</name>
</gene>
<dbReference type="EC" id="2.5.1.75" evidence="1"/>
<dbReference type="EMBL" id="CP001164">
    <property type="protein sequence ID" value="ACI39423.1"/>
    <property type="molecule type" value="Genomic_DNA"/>
</dbReference>
<dbReference type="RefSeq" id="WP_001280341.1">
    <property type="nucleotide sequence ID" value="NC_011353.1"/>
</dbReference>
<dbReference type="SMR" id="B5Z2H7"/>
<dbReference type="KEGG" id="ecf:ECH74115_5687"/>
<dbReference type="HOGENOM" id="CLU_032616_0_0_6"/>
<dbReference type="GO" id="GO:0005524">
    <property type="term" value="F:ATP binding"/>
    <property type="evidence" value="ECO:0007669"/>
    <property type="project" value="UniProtKB-UniRule"/>
</dbReference>
<dbReference type="GO" id="GO:0052381">
    <property type="term" value="F:tRNA dimethylallyltransferase activity"/>
    <property type="evidence" value="ECO:0007669"/>
    <property type="project" value="UniProtKB-UniRule"/>
</dbReference>
<dbReference type="GO" id="GO:0006400">
    <property type="term" value="P:tRNA modification"/>
    <property type="evidence" value="ECO:0007669"/>
    <property type="project" value="TreeGrafter"/>
</dbReference>
<dbReference type="FunFam" id="1.10.20.140:FF:000001">
    <property type="entry name" value="tRNA dimethylallyltransferase"/>
    <property type="match status" value="1"/>
</dbReference>
<dbReference type="FunFam" id="1.10.287.890:FF:000001">
    <property type="entry name" value="tRNA dimethylallyltransferase"/>
    <property type="match status" value="1"/>
</dbReference>
<dbReference type="Gene3D" id="1.10.20.140">
    <property type="match status" value="1"/>
</dbReference>
<dbReference type="Gene3D" id="1.10.287.890">
    <property type="entry name" value="Crystal structure of tRNA isopentenylpyrophosphate transferase (bh2366) domain"/>
    <property type="match status" value="1"/>
</dbReference>
<dbReference type="Gene3D" id="3.40.50.300">
    <property type="entry name" value="P-loop containing nucleotide triphosphate hydrolases"/>
    <property type="match status" value="1"/>
</dbReference>
<dbReference type="HAMAP" id="MF_00185">
    <property type="entry name" value="IPP_trans"/>
    <property type="match status" value="1"/>
</dbReference>
<dbReference type="InterPro" id="IPR039657">
    <property type="entry name" value="Dimethylallyltransferase"/>
</dbReference>
<dbReference type="InterPro" id="IPR018022">
    <property type="entry name" value="IPT"/>
</dbReference>
<dbReference type="InterPro" id="IPR027417">
    <property type="entry name" value="P-loop_NTPase"/>
</dbReference>
<dbReference type="NCBIfam" id="TIGR00174">
    <property type="entry name" value="miaA"/>
    <property type="match status" value="1"/>
</dbReference>
<dbReference type="PANTHER" id="PTHR11088">
    <property type="entry name" value="TRNA DIMETHYLALLYLTRANSFERASE"/>
    <property type="match status" value="1"/>
</dbReference>
<dbReference type="PANTHER" id="PTHR11088:SF60">
    <property type="entry name" value="TRNA DIMETHYLALLYLTRANSFERASE"/>
    <property type="match status" value="1"/>
</dbReference>
<dbReference type="Pfam" id="PF01715">
    <property type="entry name" value="IPPT"/>
    <property type="match status" value="1"/>
</dbReference>
<dbReference type="SUPFAM" id="SSF52540">
    <property type="entry name" value="P-loop containing nucleoside triphosphate hydrolases"/>
    <property type="match status" value="1"/>
</dbReference>
<name>MIAA_ECO5E</name>
<reference key="1">
    <citation type="journal article" date="2011" name="Proc. Natl. Acad. Sci. U.S.A.">
        <title>Genomic anatomy of Escherichia coli O157:H7 outbreaks.</title>
        <authorList>
            <person name="Eppinger M."/>
            <person name="Mammel M.K."/>
            <person name="Leclerc J.E."/>
            <person name="Ravel J."/>
            <person name="Cebula T.A."/>
        </authorList>
    </citation>
    <scope>NUCLEOTIDE SEQUENCE [LARGE SCALE GENOMIC DNA]</scope>
    <source>
        <strain>EC4115 / EHEC</strain>
    </source>
</reference>
<evidence type="ECO:0000255" key="1">
    <source>
        <dbReference type="HAMAP-Rule" id="MF_00185"/>
    </source>
</evidence>
<comment type="function">
    <text evidence="1">Catalyzes the transfer of a dimethylallyl group onto the adenine at position 37 in tRNAs that read codons beginning with uridine, leading to the formation of N6-(dimethylallyl)adenosine (i(6)A).</text>
</comment>
<comment type="catalytic activity">
    <reaction evidence="1">
        <text>adenosine(37) in tRNA + dimethylallyl diphosphate = N(6)-dimethylallyladenosine(37) in tRNA + diphosphate</text>
        <dbReference type="Rhea" id="RHEA:26482"/>
        <dbReference type="Rhea" id="RHEA-COMP:10162"/>
        <dbReference type="Rhea" id="RHEA-COMP:10375"/>
        <dbReference type="ChEBI" id="CHEBI:33019"/>
        <dbReference type="ChEBI" id="CHEBI:57623"/>
        <dbReference type="ChEBI" id="CHEBI:74411"/>
        <dbReference type="ChEBI" id="CHEBI:74415"/>
        <dbReference type="EC" id="2.5.1.75"/>
    </reaction>
</comment>
<comment type="cofactor">
    <cofactor evidence="1">
        <name>Mg(2+)</name>
        <dbReference type="ChEBI" id="CHEBI:18420"/>
    </cofactor>
</comment>
<comment type="subunit">
    <text evidence="1">Monomer.</text>
</comment>
<comment type="similarity">
    <text evidence="1">Belongs to the IPP transferase family.</text>
</comment>
<accession>B5Z2H7</accession>
<keyword id="KW-0067">ATP-binding</keyword>
<keyword id="KW-0460">Magnesium</keyword>
<keyword id="KW-0547">Nucleotide-binding</keyword>
<keyword id="KW-0808">Transferase</keyword>
<keyword id="KW-0819">tRNA processing</keyword>
<organism>
    <name type="scientific">Escherichia coli O157:H7 (strain EC4115 / EHEC)</name>
    <dbReference type="NCBI Taxonomy" id="444450"/>
    <lineage>
        <taxon>Bacteria</taxon>
        <taxon>Pseudomonadati</taxon>
        <taxon>Pseudomonadota</taxon>
        <taxon>Gammaproteobacteria</taxon>
        <taxon>Enterobacterales</taxon>
        <taxon>Enterobacteriaceae</taxon>
        <taxon>Escherichia</taxon>
    </lineage>
</organism>
<proteinExistence type="inferred from homology"/>
<sequence length="316" mass="35007">MSDISKASLPKAIFLMGPTASGKTALAIELRKILPVELISVDSALIYKGMDIGTAKPNAEELLAAPHRLLDIRDPSQAYSAADFRRDALAEMADITAAGRIPLLVGGTMLYFKALLEGLSPLPSADPEVRARIEQQAAEQGWESLHRQLQEIDPVAAARIHPNDPQRLSRALEVFFISGKTLTELTQTSGDALPYQVHQFAIAPASRELLHQRIEQRFHQMLASGFEAEVRALFARGDLHTDLPSIRCVGYRQMWSYLGGEISYDEMVYRGVCATRQLAKRQITWLRGWEGVHWLDSEKPEQARDEVLQVVGAIAG</sequence>
<protein>
    <recommendedName>
        <fullName evidence="1">tRNA dimethylallyltransferase</fullName>
        <ecNumber evidence="1">2.5.1.75</ecNumber>
    </recommendedName>
    <alternativeName>
        <fullName evidence="1">Dimethylallyl diphosphate:tRNA dimethylallyltransferase</fullName>
        <shortName evidence="1">DMAPP:tRNA dimethylallyltransferase</shortName>
        <shortName evidence="1">DMATase</shortName>
    </alternativeName>
    <alternativeName>
        <fullName evidence="1">Isopentenyl-diphosphate:tRNA isopentenyltransferase</fullName>
        <shortName evidence="1">IPP transferase</shortName>
        <shortName evidence="1">IPPT</shortName>
        <shortName evidence="1">IPTase</shortName>
    </alternativeName>
</protein>
<feature type="chain" id="PRO_1000098661" description="tRNA dimethylallyltransferase">
    <location>
        <begin position="1"/>
        <end position="316"/>
    </location>
</feature>
<feature type="region of interest" description="Interaction with substrate tRNA" evidence="1">
    <location>
        <begin position="42"/>
        <end position="45"/>
    </location>
</feature>
<feature type="region of interest" description="Interaction with substrate tRNA" evidence="1">
    <location>
        <begin position="166"/>
        <end position="170"/>
    </location>
</feature>
<feature type="region of interest" description="Interaction with substrate tRNA" evidence="1">
    <location>
        <begin position="247"/>
        <end position="252"/>
    </location>
</feature>
<feature type="region of interest" description="Interaction with substrate tRNA" evidence="1">
    <location>
        <begin position="280"/>
        <end position="287"/>
    </location>
</feature>
<feature type="binding site" evidence="1">
    <location>
        <begin position="17"/>
        <end position="24"/>
    </location>
    <ligand>
        <name>ATP</name>
        <dbReference type="ChEBI" id="CHEBI:30616"/>
    </ligand>
</feature>
<feature type="binding site" evidence="1">
    <location>
        <begin position="19"/>
        <end position="24"/>
    </location>
    <ligand>
        <name>substrate</name>
    </ligand>
</feature>
<feature type="site" description="Interaction with substrate tRNA" evidence="1">
    <location>
        <position position="108"/>
    </location>
</feature>
<feature type="site" description="Interaction with substrate tRNA" evidence="1">
    <location>
        <position position="130"/>
    </location>
</feature>